<comment type="function">
    <text evidence="1">Produces ATP from ADP in the presence of a proton gradient across the membrane. The V-type alpha chain is a catalytic subunit.</text>
</comment>
<comment type="catalytic activity">
    <reaction evidence="1">
        <text>ATP + H2O + 4 H(+)(in) = ADP + phosphate + 5 H(+)(out)</text>
        <dbReference type="Rhea" id="RHEA:57720"/>
        <dbReference type="ChEBI" id="CHEBI:15377"/>
        <dbReference type="ChEBI" id="CHEBI:15378"/>
        <dbReference type="ChEBI" id="CHEBI:30616"/>
        <dbReference type="ChEBI" id="CHEBI:43474"/>
        <dbReference type="ChEBI" id="CHEBI:456216"/>
        <dbReference type="EC" id="7.1.2.2"/>
    </reaction>
</comment>
<comment type="similarity">
    <text evidence="1">Belongs to the ATPase alpha/beta chains family.</text>
</comment>
<gene>
    <name evidence="1" type="primary">atpA</name>
    <name type="ordered locus">BDU_97</name>
</gene>
<feature type="chain" id="PRO_1000115631" description="V-type ATP synthase alpha chain">
    <location>
        <begin position="1"/>
        <end position="576"/>
    </location>
</feature>
<feature type="binding site" evidence="1">
    <location>
        <begin position="238"/>
        <end position="245"/>
    </location>
    <ligand>
        <name>ATP</name>
        <dbReference type="ChEBI" id="CHEBI:30616"/>
    </ligand>
</feature>
<accession>B5RLG8</accession>
<dbReference type="EC" id="7.1.2.2" evidence="1"/>
<dbReference type="EMBL" id="CP000976">
    <property type="protein sequence ID" value="ACH93053.1"/>
    <property type="molecule type" value="Genomic_DNA"/>
</dbReference>
<dbReference type="RefSeq" id="WP_012537865.1">
    <property type="nucleotide sequence ID" value="NC_011229.1"/>
</dbReference>
<dbReference type="SMR" id="B5RLG8"/>
<dbReference type="STRING" id="412419.BDU_97"/>
<dbReference type="KEGG" id="bdu:BDU_97"/>
<dbReference type="eggNOG" id="COG1155">
    <property type="taxonomic scope" value="Bacteria"/>
</dbReference>
<dbReference type="HOGENOM" id="CLU_008162_1_1_12"/>
<dbReference type="OrthoDB" id="9803053at2"/>
<dbReference type="Proteomes" id="UP000000611">
    <property type="component" value="Chromosome"/>
</dbReference>
<dbReference type="GO" id="GO:0045259">
    <property type="term" value="C:proton-transporting ATP synthase complex"/>
    <property type="evidence" value="ECO:0007669"/>
    <property type="project" value="UniProtKB-ARBA"/>
</dbReference>
<dbReference type="GO" id="GO:0005524">
    <property type="term" value="F:ATP binding"/>
    <property type="evidence" value="ECO:0007669"/>
    <property type="project" value="UniProtKB-UniRule"/>
</dbReference>
<dbReference type="GO" id="GO:0046933">
    <property type="term" value="F:proton-transporting ATP synthase activity, rotational mechanism"/>
    <property type="evidence" value="ECO:0007669"/>
    <property type="project" value="UniProtKB-UniRule"/>
</dbReference>
<dbReference type="GO" id="GO:0046961">
    <property type="term" value="F:proton-transporting ATPase activity, rotational mechanism"/>
    <property type="evidence" value="ECO:0007669"/>
    <property type="project" value="InterPro"/>
</dbReference>
<dbReference type="GO" id="GO:0042777">
    <property type="term" value="P:proton motive force-driven plasma membrane ATP synthesis"/>
    <property type="evidence" value="ECO:0007669"/>
    <property type="project" value="UniProtKB-UniRule"/>
</dbReference>
<dbReference type="CDD" id="cd01426">
    <property type="entry name" value="ATP-synt_F1_V1_A1_AB_FliI_N"/>
    <property type="match status" value="1"/>
</dbReference>
<dbReference type="CDD" id="cd18111">
    <property type="entry name" value="ATP-synt_V_A-type_alpha_C"/>
    <property type="match status" value="1"/>
</dbReference>
<dbReference type="CDD" id="cd01134">
    <property type="entry name" value="V_A-ATPase_A"/>
    <property type="match status" value="1"/>
</dbReference>
<dbReference type="Gene3D" id="2.40.30.20">
    <property type="match status" value="1"/>
</dbReference>
<dbReference type="Gene3D" id="2.40.50.100">
    <property type="match status" value="1"/>
</dbReference>
<dbReference type="Gene3D" id="1.10.1140.10">
    <property type="entry name" value="Bovine Mitochondrial F1-atpase, Atp Synthase Beta Chain, Chain D, domain 3"/>
    <property type="match status" value="1"/>
</dbReference>
<dbReference type="Gene3D" id="3.40.50.300">
    <property type="entry name" value="P-loop containing nucleotide triphosphate hydrolases"/>
    <property type="match status" value="1"/>
</dbReference>
<dbReference type="HAMAP" id="MF_00309">
    <property type="entry name" value="ATP_synth_A_arch"/>
    <property type="match status" value="1"/>
</dbReference>
<dbReference type="InterPro" id="IPR055190">
    <property type="entry name" value="ATP-synt_VA_C"/>
</dbReference>
<dbReference type="InterPro" id="IPR031686">
    <property type="entry name" value="ATP-synth_a_Xtn"/>
</dbReference>
<dbReference type="InterPro" id="IPR023366">
    <property type="entry name" value="ATP_synth_asu-like_sf"/>
</dbReference>
<dbReference type="InterPro" id="IPR020003">
    <property type="entry name" value="ATPase_a/bsu_AS"/>
</dbReference>
<dbReference type="InterPro" id="IPR004100">
    <property type="entry name" value="ATPase_F1/V1/A1_a/bsu_N"/>
</dbReference>
<dbReference type="InterPro" id="IPR036121">
    <property type="entry name" value="ATPase_F1/V1/A1_a/bsu_N_sf"/>
</dbReference>
<dbReference type="InterPro" id="IPR000194">
    <property type="entry name" value="ATPase_F1/V1/A1_a/bsu_nucl-bd"/>
</dbReference>
<dbReference type="InterPro" id="IPR024034">
    <property type="entry name" value="ATPase_F1/V1_b/a_C"/>
</dbReference>
<dbReference type="InterPro" id="IPR027417">
    <property type="entry name" value="P-loop_NTPase"/>
</dbReference>
<dbReference type="InterPro" id="IPR022878">
    <property type="entry name" value="V-ATPase_asu"/>
</dbReference>
<dbReference type="NCBIfam" id="NF003220">
    <property type="entry name" value="PRK04192.1"/>
    <property type="match status" value="1"/>
</dbReference>
<dbReference type="PANTHER" id="PTHR43607:SF1">
    <property type="entry name" value="H(+)-TRANSPORTING TWO-SECTOR ATPASE"/>
    <property type="match status" value="1"/>
</dbReference>
<dbReference type="PANTHER" id="PTHR43607">
    <property type="entry name" value="V-TYPE PROTON ATPASE CATALYTIC SUBUNIT A"/>
    <property type="match status" value="1"/>
</dbReference>
<dbReference type="Pfam" id="PF00006">
    <property type="entry name" value="ATP-synt_ab"/>
    <property type="match status" value="1"/>
</dbReference>
<dbReference type="Pfam" id="PF02874">
    <property type="entry name" value="ATP-synt_ab_N"/>
    <property type="match status" value="1"/>
</dbReference>
<dbReference type="Pfam" id="PF16886">
    <property type="entry name" value="ATP-synt_ab_Xtn"/>
    <property type="match status" value="1"/>
</dbReference>
<dbReference type="Pfam" id="PF22919">
    <property type="entry name" value="ATP-synt_VA_C"/>
    <property type="match status" value="1"/>
</dbReference>
<dbReference type="SUPFAM" id="SSF47917">
    <property type="entry name" value="C-terminal domain of alpha and beta subunits of F1 ATP synthase"/>
    <property type="match status" value="1"/>
</dbReference>
<dbReference type="SUPFAM" id="SSF50615">
    <property type="entry name" value="N-terminal domain of alpha and beta subunits of F1 ATP synthase"/>
    <property type="match status" value="1"/>
</dbReference>
<dbReference type="SUPFAM" id="SSF52540">
    <property type="entry name" value="P-loop containing nucleoside triphosphate hydrolases"/>
    <property type="match status" value="1"/>
</dbReference>
<dbReference type="PROSITE" id="PS00152">
    <property type="entry name" value="ATPASE_ALPHA_BETA"/>
    <property type="match status" value="1"/>
</dbReference>
<proteinExistence type="inferred from homology"/>
<protein>
    <recommendedName>
        <fullName evidence="1">V-type ATP synthase alpha chain</fullName>
        <ecNumber evidence="1">7.1.2.2</ecNumber>
    </recommendedName>
    <alternativeName>
        <fullName evidence="1">V-ATPase subunit A</fullName>
    </alternativeName>
</protein>
<keyword id="KW-0066">ATP synthesis</keyword>
<keyword id="KW-0067">ATP-binding</keyword>
<keyword id="KW-0375">Hydrogen ion transport</keyword>
<keyword id="KW-0406">Ion transport</keyword>
<keyword id="KW-0547">Nucleotide-binding</keyword>
<keyword id="KW-1278">Translocase</keyword>
<keyword id="KW-0813">Transport</keyword>
<evidence type="ECO:0000255" key="1">
    <source>
        <dbReference type="HAMAP-Rule" id="MF_00309"/>
    </source>
</evidence>
<sequence>MEAKGKVVGVIGNLVTIEMVGTVSMNEIVFIKTGGQSLKAEIIRIRDGEVDAQVFEMTRGIAVGDDVEFTDKLLTVELGPGLLSQVYDGLQNPLPELATKCGFFLERGLYLSALDRNKKWSFNATAKVGDFVVAGDFLGFVIEGTINHQIMVPFDRRDSYRIIEIVGDGDYTVDDKIAVIEDDAGGKHIITMSFHWPVKVPVTSYKKRLIPNETMVTQTRIIDTFFPVAKGGTFCIPGPFGAGKTVLQQVTSRNADVDIVIIAACGERAGEVVETLKEFPELTDPRTGKSLMERTCIICNTSSMPVAAREASVYTAITIGEYYRQMGLDILLLADSTSRWAQAMREMSGRLEEIPGDEAFPAYLESVIASFYERAGVVVLNNGSVGSVTVGGSVSPAGGNFEEPVTQATLKVVGAFHGLTRERSDARKFPAINPLDSWSKYRGVVEYEATEYARAFLVKGNEVNQMMRVVGEDGVSIDDFVVYLKSELLDSCYLQQNSFDSVDAAVSFERQNYMFNILYKILQSDFKFENKLEARSFINDLRQNILDMNLAPFKQEKFNKLEINLKNLLRSKKLDF</sequence>
<reference key="1">
    <citation type="journal article" date="2008" name="PLoS Genet.">
        <title>The genome of Borrelia recurrentis, the agent of deadly louse-borne relapsing fever, is a degraded subset of tick-borne Borrelia duttonii.</title>
        <authorList>
            <person name="Lescot M."/>
            <person name="Audic S."/>
            <person name="Robert C."/>
            <person name="Nguyen T.T."/>
            <person name="Blanc G."/>
            <person name="Cutler S.J."/>
            <person name="Wincker P."/>
            <person name="Couloux A."/>
            <person name="Claverie J.-M."/>
            <person name="Raoult D."/>
            <person name="Drancourt M."/>
        </authorList>
    </citation>
    <scope>NUCLEOTIDE SEQUENCE [LARGE SCALE GENOMIC DNA]</scope>
    <source>
        <strain>Ly</strain>
    </source>
</reference>
<name>VATA_BORDL</name>
<organism>
    <name type="scientific">Borrelia duttonii (strain Ly)</name>
    <dbReference type="NCBI Taxonomy" id="412419"/>
    <lineage>
        <taxon>Bacteria</taxon>
        <taxon>Pseudomonadati</taxon>
        <taxon>Spirochaetota</taxon>
        <taxon>Spirochaetia</taxon>
        <taxon>Spirochaetales</taxon>
        <taxon>Borreliaceae</taxon>
        <taxon>Borrelia</taxon>
    </lineage>
</organism>